<evidence type="ECO:0000255" key="1">
    <source>
        <dbReference type="HAMAP-Rule" id="MF_01080"/>
    </source>
</evidence>
<accession>Q6GHG4</accession>
<keyword id="KW-0413">Isomerase</keyword>
<keyword id="KW-0819">tRNA processing</keyword>
<protein>
    <recommendedName>
        <fullName evidence="1">tRNA pseudouridine synthase B</fullName>
        <ecNumber evidence="1">5.4.99.25</ecNumber>
    </recommendedName>
    <alternativeName>
        <fullName evidence="1">tRNA pseudouridine(55) synthase</fullName>
        <shortName evidence="1">Psi55 synthase</shortName>
    </alternativeName>
    <alternativeName>
        <fullName evidence="1">tRNA pseudouridylate synthase</fullName>
    </alternativeName>
    <alternativeName>
        <fullName evidence="1">tRNA-uridine isomerase</fullName>
    </alternativeName>
</protein>
<organism>
    <name type="scientific">Staphylococcus aureus (strain MRSA252)</name>
    <dbReference type="NCBI Taxonomy" id="282458"/>
    <lineage>
        <taxon>Bacteria</taxon>
        <taxon>Bacillati</taxon>
        <taxon>Bacillota</taxon>
        <taxon>Bacilli</taxon>
        <taxon>Bacillales</taxon>
        <taxon>Staphylococcaceae</taxon>
        <taxon>Staphylococcus</taxon>
    </lineage>
</organism>
<gene>
    <name evidence="1" type="primary">truB</name>
    <name type="ordered locus">SAR1247</name>
</gene>
<comment type="function">
    <text evidence="1">Responsible for synthesis of pseudouridine from uracil-55 in the psi GC loop of transfer RNAs.</text>
</comment>
<comment type="catalytic activity">
    <reaction evidence="1">
        <text>uridine(55) in tRNA = pseudouridine(55) in tRNA</text>
        <dbReference type="Rhea" id="RHEA:42532"/>
        <dbReference type="Rhea" id="RHEA-COMP:10101"/>
        <dbReference type="Rhea" id="RHEA-COMP:10102"/>
        <dbReference type="ChEBI" id="CHEBI:65314"/>
        <dbReference type="ChEBI" id="CHEBI:65315"/>
        <dbReference type="EC" id="5.4.99.25"/>
    </reaction>
</comment>
<comment type="similarity">
    <text evidence="1">Belongs to the pseudouridine synthase TruB family. Type 1 subfamily.</text>
</comment>
<sequence>MYNGILPVYKERGLTSHDVVFKLRKILKTKKIGHTGTLDPEVAGVLPVCIGNATRVSDYVMDMGKAYEATVSIGRSTTTEDQTGDTLEMKGVHSANFNNDDIDRLLESFKGIIEQIPPMYSSVKVNGKKLYEYARNNETVERPKRKVNIKDIGRISELDFKENECHFKIRVICGKGTYIRTLATDIGVKLGFPAHMSKLTRIESGGFVLKDSLTLEQIKELHEQDSLQNKLFPLEYGLKGLPSIKIKDSHIKKRILNGQKFNKNEFDNKIKDQIVFIDDDSEKVLAIYMVHPTKESEIKPKKVFN</sequence>
<proteinExistence type="inferred from homology"/>
<feature type="chain" id="PRO_0000121905" description="tRNA pseudouridine synthase B">
    <location>
        <begin position="1"/>
        <end position="305"/>
    </location>
</feature>
<feature type="active site" description="Nucleophile" evidence="1">
    <location>
        <position position="39"/>
    </location>
</feature>
<reference key="1">
    <citation type="journal article" date="2004" name="Proc. Natl. Acad. Sci. U.S.A.">
        <title>Complete genomes of two clinical Staphylococcus aureus strains: evidence for the rapid evolution of virulence and drug resistance.</title>
        <authorList>
            <person name="Holden M.T.G."/>
            <person name="Feil E.J."/>
            <person name="Lindsay J.A."/>
            <person name="Peacock S.J."/>
            <person name="Day N.P.J."/>
            <person name="Enright M.C."/>
            <person name="Foster T.J."/>
            <person name="Moore C.E."/>
            <person name="Hurst L."/>
            <person name="Atkin R."/>
            <person name="Barron A."/>
            <person name="Bason N."/>
            <person name="Bentley S.D."/>
            <person name="Chillingworth C."/>
            <person name="Chillingworth T."/>
            <person name="Churcher C."/>
            <person name="Clark L."/>
            <person name="Corton C."/>
            <person name="Cronin A."/>
            <person name="Doggett J."/>
            <person name="Dowd L."/>
            <person name="Feltwell T."/>
            <person name="Hance Z."/>
            <person name="Harris B."/>
            <person name="Hauser H."/>
            <person name="Holroyd S."/>
            <person name="Jagels K."/>
            <person name="James K.D."/>
            <person name="Lennard N."/>
            <person name="Line A."/>
            <person name="Mayes R."/>
            <person name="Moule S."/>
            <person name="Mungall K."/>
            <person name="Ormond D."/>
            <person name="Quail M.A."/>
            <person name="Rabbinowitsch E."/>
            <person name="Rutherford K.M."/>
            <person name="Sanders M."/>
            <person name="Sharp S."/>
            <person name="Simmonds M."/>
            <person name="Stevens K."/>
            <person name="Whitehead S."/>
            <person name="Barrell B.G."/>
            <person name="Spratt B.G."/>
            <person name="Parkhill J."/>
        </authorList>
    </citation>
    <scope>NUCLEOTIDE SEQUENCE [LARGE SCALE GENOMIC DNA]</scope>
    <source>
        <strain>MRSA252</strain>
    </source>
</reference>
<name>TRUB_STAAR</name>
<dbReference type="EC" id="5.4.99.25" evidence="1"/>
<dbReference type="EMBL" id="BX571856">
    <property type="protein sequence ID" value="CAG40249.1"/>
    <property type="molecule type" value="Genomic_DNA"/>
</dbReference>
<dbReference type="RefSeq" id="WP_000282296.1">
    <property type="nucleotide sequence ID" value="NC_002952.2"/>
</dbReference>
<dbReference type="SMR" id="Q6GHG4"/>
<dbReference type="KEGG" id="sar:SAR1247"/>
<dbReference type="HOGENOM" id="CLU_032087_0_1_9"/>
<dbReference type="Proteomes" id="UP000000596">
    <property type="component" value="Chromosome"/>
</dbReference>
<dbReference type="GO" id="GO:0003723">
    <property type="term" value="F:RNA binding"/>
    <property type="evidence" value="ECO:0007669"/>
    <property type="project" value="InterPro"/>
</dbReference>
<dbReference type="GO" id="GO:0160148">
    <property type="term" value="F:tRNA pseudouridine(55) synthase activity"/>
    <property type="evidence" value="ECO:0007669"/>
    <property type="project" value="UniProtKB-EC"/>
</dbReference>
<dbReference type="GO" id="GO:1990481">
    <property type="term" value="P:mRNA pseudouridine synthesis"/>
    <property type="evidence" value="ECO:0007669"/>
    <property type="project" value="TreeGrafter"/>
</dbReference>
<dbReference type="GO" id="GO:0031119">
    <property type="term" value="P:tRNA pseudouridine synthesis"/>
    <property type="evidence" value="ECO:0007669"/>
    <property type="project" value="UniProtKB-UniRule"/>
</dbReference>
<dbReference type="CDD" id="cd02573">
    <property type="entry name" value="PseudoU_synth_EcTruB"/>
    <property type="match status" value="1"/>
</dbReference>
<dbReference type="FunFam" id="3.30.2350.10:FF:000011">
    <property type="entry name" value="tRNA pseudouridine synthase B"/>
    <property type="match status" value="1"/>
</dbReference>
<dbReference type="Gene3D" id="3.30.2350.10">
    <property type="entry name" value="Pseudouridine synthase"/>
    <property type="match status" value="1"/>
</dbReference>
<dbReference type="HAMAP" id="MF_01080">
    <property type="entry name" value="TruB_bact"/>
    <property type="match status" value="1"/>
</dbReference>
<dbReference type="InterPro" id="IPR020103">
    <property type="entry name" value="PsdUridine_synth_cat_dom_sf"/>
</dbReference>
<dbReference type="InterPro" id="IPR002501">
    <property type="entry name" value="PsdUridine_synth_N"/>
</dbReference>
<dbReference type="InterPro" id="IPR014780">
    <property type="entry name" value="tRNA_psdUridine_synth_TruB"/>
</dbReference>
<dbReference type="InterPro" id="IPR032819">
    <property type="entry name" value="TruB_C"/>
</dbReference>
<dbReference type="NCBIfam" id="TIGR00431">
    <property type="entry name" value="TruB"/>
    <property type="match status" value="1"/>
</dbReference>
<dbReference type="PANTHER" id="PTHR13767:SF2">
    <property type="entry name" value="PSEUDOURIDYLATE SYNTHASE TRUB1"/>
    <property type="match status" value="1"/>
</dbReference>
<dbReference type="PANTHER" id="PTHR13767">
    <property type="entry name" value="TRNA-PSEUDOURIDINE SYNTHASE"/>
    <property type="match status" value="1"/>
</dbReference>
<dbReference type="Pfam" id="PF16198">
    <property type="entry name" value="TruB_C_2"/>
    <property type="match status" value="1"/>
</dbReference>
<dbReference type="Pfam" id="PF01509">
    <property type="entry name" value="TruB_N"/>
    <property type="match status" value="1"/>
</dbReference>
<dbReference type="SUPFAM" id="SSF55120">
    <property type="entry name" value="Pseudouridine synthase"/>
    <property type="match status" value="1"/>
</dbReference>